<organism>
    <name type="scientific">Herminiimonas arsenicoxydans</name>
    <dbReference type="NCBI Taxonomy" id="204773"/>
    <lineage>
        <taxon>Bacteria</taxon>
        <taxon>Pseudomonadati</taxon>
        <taxon>Pseudomonadota</taxon>
        <taxon>Betaproteobacteria</taxon>
        <taxon>Burkholderiales</taxon>
        <taxon>Oxalobacteraceae</taxon>
        <taxon>Herminiimonas</taxon>
    </lineage>
</organism>
<comment type="catalytic activity">
    <reaction evidence="1">
        <text>1-(5-phospho-beta-D-ribosyl)-5-[(5-phospho-beta-D-ribosylamino)methylideneamino]imidazole-4-carboxamide = 5-[(5-phospho-1-deoxy-D-ribulos-1-ylimino)methylamino]-1-(5-phospho-beta-D-ribosyl)imidazole-4-carboxamide</text>
        <dbReference type="Rhea" id="RHEA:15469"/>
        <dbReference type="ChEBI" id="CHEBI:58435"/>
        <dbReference type="ChEBI" id="CHEBI:58525"/>
        <dbReference type="EC" id="5.3.1.16"/>
    </reaction>
</comment>
<comment type="pathway">
    <text evidence="1">Amino-acid biosynthesis; L-histidine biosynthesis; L-histidine from 5-phospho-alpha-D-ribose 1-diphosphate: step 4/9.</text>
</comment>
<comment type="subcellular location">
    <subcellularLocation>
        <location evidence="1">Cytoplasm</location>
    </subcellularLocation>
</comment>
<comment type="similarity">
    <text evidence="1">Belongs to the HisA/HisF family.</text>
</comment>
<feature type="chain" id="PRO_1000063212" description="1-(5-phosphoribosyl)-5-[(5-phosphoribosylamino)methylideneamino] imidazole-4-carboxamide isomerase">
    <location>
        <begin position="1"/>
        <end position="265"/>
    </location>
</feature>
<feature type="active site" description="Proton acceptor" evidence="1">
    <location>
        <position position="8"/>
    </location>
</feature>
<feature type="active site" description="Proton donor" evidence="1">
    <location>
        <position position="139"/>
    </location>
</feature>
<sequence length="265" mass="28375">MLLIPAIDLKDGHCVRLKQGDMDQATVFSEDPADMARHWLEQGARRLHLVDLNGAFAGKPKNEPAVKAILQAVREYAEKNGIEEIPVQLGGGIRDLDTIERYLDDGLSYIIIGTAAVKNPGFLHDACSAFPGQIIVGLDAKDGKVATDGWSKLSGHEVIDLAKKFEDYGCESIIYTDIGRDGMMGGVNIEATVKLAQSMTIPVIASGGVHNIKDVEALCAVQEEGIEGVICGRSIYEGTLDLRSAQDRADELSGVGPETEAEAGE</sequence>
<name>HIS4_HERAR</name>
<dbReference type="EC" id="5.3.1.16" evidence="1"/>
<dbReference type="EMBL" id="CU207211">
    <property type="protein sequence ID" value="CAL63174.1"/>
    <property type="molecule type" value="Genomic_DNA"/>
</dbReference>
<dbReference type="SMR" id="A4G9I7"/>
<dbReference type="STRING" id="204773.HEAR3065"/>
<dbReference type="KEGG" id="har:HEAR3065"/>
<dbReference type="eggNOG" id="COG0106">
    <property type="taxonomic scope" value="Bacteria"/>
</dbReference>
<dbReference type="HOGENOM" id="CLU_048577_1_1_4"/>
<dbReference type="OrthoDB" id="9807749at2"/>
<dbReference type="UniPathway" id="UPA00031">
    <property type="reaction ID" value="UER00009"/>
</dbReference>
<dbReference type="Proteomes" id="UP000006697">
    <property type="component" value="Chromosome"/>
</dbReference>
<dbReference type="GO" id="GO:0005737">
    <property type="term" value="C:cytoplasm"/>
    <property type="evidence" value="ECO:0007669"/>
    <property type="project" value="UniProtKB-SubCell"/>
</dbReference>
<dbReference type="GO" id="GO:0003949">
    <property type="term" value="F:1-(5-phosphoribosyl)-5-[(5-phosphoribosylamino)methylideneamino]imidazole-4-carboxamide isomerase activity"/>
    <property type="evidence" value="ECO:0007669"/>
    <property type="project" value="UniProtKB-UniRule"/>
</dbReference>
<dbReference type="GO" id="GO:0000105">
    <property type="term" value="P:L-histidine biosynthetic process"/>
    <property type="evidence" value="ECO:0007669"/>
    <property type="project" value="UniProtKB-UniRule"/>
</dbReference>
<dbReference type="GO" id="GO:0000162">
    <property type="term" value="P:L-tryptophan biosynthetic process"/>
    <property type="evidence" value="ECO:0007669"/>
    <property type="project" value="TreeGrafter"/>
</dbReference>
<dbReference type="CDD" id="cd04732">
    <property type="entry name" value="HisA"/>
    <property type="match status" value="1"/>
</dbReference>
<dbReference type="FunFam" id="3.20.20.70:FF:000009">
    <property type="entry name" value="1-(5-phosphoribosyl)-5-[(5-phosphoribosylamino)methylideneamino] imidazole-4-carboxamide isomerase"/>
    <property type="match status" value="1"/>
</dbReference>
<dbReference type="Gene3D" id="3.20.20.70">
    <property type="entry name" value="Aldolase class I"/>
    <property type="match status" value="1"/>
</dbReference>
<dbReference type="HAMAP" id="MF_01014">
    <property type="entry name" value="HisA"/>
    <property type="match status" value="1"/>
</dbReference>
<dbReference type="InterPro" id="IPR013785">
    <property type="entry name" value="Aldolase_TIM"/>
</dbReference>
<dbReference type="InterPro" id="IPR006062">
    <property type="entry name" value="His_biosynth"/>
</dbReference>
<dbReference type="InterPro" id="IPR006063">
    <property type="entry name" value="HisA_bact_arch"/>
</dbReference>
<dbReference type="InterPro" id="IPR044524">
    <property type="entry name" value="Isoase_HisA-like"/>
</dbReference>
<dbReference type="InterPro" id="IPR023016">
    <property type="entry name" value="Isoase_HisA-like_bact"/>
</dbReference>
<dbReference type="InterPro" id="IPR011060">
    <property type="entry name" value="RibuloseP-bd_barrel"/>
</dbReference>
<dbReference type="NCBIfam" id="TIGR00007">
    <property type="entry name" value="1-(5-phosphoribosyl)-5-[(5-phosphoribosylamino)methylideneamino]imidazole-4-carboxamide isomerase"/>
    <property type="match status" value="1"/>
</dbReference>
<dbReference type="PANTHER" id="PTHR43090">
    <property type="entry name" value="1-(5-PHOSPHORIBOSYL)-5-[(5-PHOSPHORIBOSYLAMINO)METHYLIDENEAMINO] IMIDAZOLE-4-CARBOXAMIDE ISOMERASE"/>
    <property type="match status" value="1"/>
</dbReference>
<dbReference type="PANTHER" id="PTHR43090:SF2">
    <property type="entry name" value="1-(5-PHOSPHORIBOSYL)-5-[(5-PHOSPHORIBOSYLAMINO)METHYLIDENEAMINO] IMIDAZOLE-4-CARBOXAMIDE ISOMERASE"/>
    <property type="match status" value="1"/>
</dbReference>
<dbReference type="Pfam" id="PF00977">
    <property type="entry name" value="His_biosynth"/>
    <property type="match status" value="1"/>
</dbReference>
<dbReference type="SUPFAM" id="SSF51366">
    <property type="entry name" value="Ribulose-phoshate binding barrel"/>
    <property type="match status" value="1"/>
</dbReference>
<proteinExistence type="inferred from homology"/>
<gene>
    <name evidence="1" type="primary">hisA</name>
    <name type="ordered locus">HEAR3065</name>
</gene>
<protein>
    <recommendedName>
        <fullName evidence="1">1-(5-phosphoribosyl)-5-[(5-phosphoribosylamino)methylideneamino] imidazole-4-carboxamide isomerase</fullName>
        <ecNumber evidence="1">5.3.1.16</ecNumber>
    </recommendedName>
    <alternativeName>
        <fullName evidence="1">Phosphoribosylformimino-5-aminoimidazole carboxamide ribotide isomerase</fullName>
    </alternativeName>
</protein>
<reference key="1">
    <citation type="journal article" date="2007" name="PLoS Genet.">
        <title>A tale of two oxidation states: bacterial colonization of arsenic-rich environments.</title>
        <authorList>
            <person name="Muller D."/>
            <person name="Medigue C."/>
            <person name="Koechler S."/>
            <person name="Barbe V."/>
            <person name="Barakat M."/>
            <person name="Talla E."/>
            <person name="Bonnefoy V."/>
            <person name="Krin E."/>
            <person name="Arsene-Ploetze F."/>
            <person name="Carapito C."/>
            <person name="Chandler M."/>
            <person name="Cournoyer B."/>
            <person name="Cruveiller S."/>
            <person name="Dossat C."/>
            <person name="Duval S."/>
            <person name="Heymann M."/>
            <person name="Leize E."/>
            <person name="Lieutaud A."/>
            <person name="Lievremont D."/>
            <person name="Makita Y."/>
            <person name="Mangenot S."/>
            <person name="Nitschke W."/>
            <person name="Ortet P."/>
            <person name="Perdrial N."/>
            <person name="Schoepp B."/>
            <person name="Siguier P."/>
            <person name="Simeonova D.D."/>
            <person name="Rouy Z."/>
            <person name="Segurens B."/>
            <person name="Turlin E."/>
            <person name="Vallenet D."/>
            <person name="van Dorsselaer A."/>
            <person name="Weiss S."/>
            <person name="Weissenbach J."/>
            <person name="Lett M.-C."/>
            <person name="Danchin A."/>
            <person name="Bertin P.N."/>
        </authorList>
    </citation>
    <scope>NUCLEOTIDE SEQUENCE [LARGE SCALE GENOMIC DNA]</scope>
    <source>
        <strain>ULPAs1</strain>
    </source>
</reference>
<keyword id="KW-0028">Amino-acid biosynthesis</keyword>
<keyword id="KW-0963">Cytoplasm</keyword>
<keyword id="KW-0368">Histidine biosynthesis</keyword>
<keyword id="KW-0413">Isomerase</keyword>
<keyword id="KW-1185">Reference proteome</keyword>
<evidence type="ECO:0000255" key="1">
    <source>
        <dbReference type="HAMAP-Rule" id="MF_01014"/>
    </source>
</evidence>
<accession>A4G9I7</accession>